<feature type="chain" id="PRO_0000382314" description="Glutamate-1-semialdehyde 2,1-aminomutase 2">
    <location>
        <begin position="1"/>
        <end position="436"/>
    </location>
</feature>
<feature type="modified residue" description="N6-(pyridoxal phosphate)lysine" evidence="1">
    <location>
        <position position="271"/>
    </location>
</feature>
<name>GSA2_EXIS2</name>
<comment type="catalytic activity">
    <reaction evidence="1">
        <text>(S)-4-amino-5-oxopentanoate = 5-aminolevulinate</text>
        <dbReference type="Rhea" id="RHEA:14265"/>
        <dbReference type="ChEBI" id="CHEBI:57501"/>
        <dbReference type="ChEBI" id="CHEBI:356416"/>
        <dbReference type="EC" id="5.4.3.8"/>
    </reaction>
</comment>
<comment type="cofactor">
    <cofactor evidence="1">
        <name>pyridoxal 5'-phosphate</name>
        <dbReference type="ChEBI" id="CHEBI:597326"/>
    </cofactor>
</comment>
<comment type="pathway">
    <text evidence="1">Porphyrin-containing compound metabolism; protoporphyrin-IX biosynthesis; 5-aminolevulinate from L-glutamyl-tRNA(Glu): step 2/2.</text>
</comment>
<comment type="subunit">
    <text evidence="1">Homodimer.</text>
</comment>
<comment type="subcellular location">
    <subcellularLocation>
        <location evidence="1">Cytoplasm</location>
    </subcellularLocation>
</comment>
<comment type="similarity">
    <text evidence="1">Belongs to the class-III pyridoxal-phosphate-dependent aminotransferase family. HemL subfamily.</text>
</comment>
<sequence>MSLTNQNSKSKAAFERALPLMPGGVNSPVRAYKSVGMTPIFAERAQGSRLYDIDGKEYIDYVLSWGPMILGHADPIVTAAIQEQATRGWSYGTPTEIESAMAEVVISRVPSVEVVRMVNSGTEATMAALRLARGYTGKTKILKFEGCYHGHGDSLLIKAGSGVATLGLPDSPGVPAQIASMTLTVPYNDMDAVRIAFEKHGDDIAGVIVEPAAGNMGFVPPQPGFLEGLREITEQHGTLLIFDEVMTGFRVGFNCAQGHFGVTPDITCLGKVIGGGMPVGAYGGRRDIMEQIAPQGPIYQAGTLSGNPLAMAAGLATLTQLKPEHYEEFDRKANRLSEGYLAAAAKYNIPLTTNRAGAMFGVFFTDQPVTNFEQAKSSNLDMFRSYYQKMAARGVFLPPSQFEGLFLSTVHTDDDIEQTLAAVELTFKELQLEFNR</sequence>
<dbReference type="EC" id="5.4.3.8" evidence="1"/>
<dbReference type="EMBL" id="CP001022">
    <property type="protein sequence ID" value="ACB61586.1"/>
    <property type="molecule type" value="Genomic_DNA"/>
</dbReference>
<dbReference type="RefSeq" id="WP_012371003.1">
    <property type="nucleotide sequence ID" value="NC_010556.1"/>
</dbReference>
<dbReference type="SMR" id="B1YJU8"/>
<dbReference type="STRING" id="262543.Exig_2134"/>
<dbReference type="KEGG" id="esi:Exig_2134"/>
<dbReference type="eggNOG" id="COG0001">
    <property type="taxonomic scope" value="Bacteria"/>
</dbReference>
<dbReference type="HOGENOM" id="CLU_016922_1_5_9"/>
<dbReference type="OrthoDB" id="9807885at2"/>
<dbReference type="UniPathway" id="UPA00251">
    <property type="reaction ID" value="UER00317"/>
</dbReference>
<dbReference type="Proteomes" id="UP000001681">
    <property type="component" value="Chromosome"/>
</dbReference>
<dbReference type="GO" id="GO:0005737">
    <property type="term" value="C:cytoplasm"/>
    <property type="evidence" value="ECO:0007669"/>
    <property type="project" value="UniProtKB-SubCell"/>
</dbReference>
<dbReference type="GO" id="GO:0042286">
    <property type="term" value="F:glutamate-1-semialdehyde 2,1-aminomutase activity"/>
    <property type="evidence" value="ECO:0007669"/>
    <property type="project" value="UniProtKB-UniRule"/>
</dbReference>
<dbReference type="GO" id="GO:0030170">
    <property type="term" value="F:pyridoxal phosphate binding"/>
    <property type="evidence" value="ECO:0007669"/>
    <property type="project" value="InterPro"/>
</dbReference>
<dbReference type="GO" id="GO:0008483">
    <property type="term" value="F:transaminase activity"/>
    <property type="evidence" value="ECO:0007669"/>
    <property type="project" value="InterPro"/>
</dbReference>
<dbReference type="GO" id="GO:0006782">
    <property type="term" value="P:protoporphyrinogen IX biosynthetic process"/>
    <property type="evidence" value="ECO:0007669"/>
    <property type="project" value="UniProtKB-UniRule"/>
</dbReference>
<dbReference type="CDD" id="cd00610">
    <property type="entry name" value="OAT_like"/>
    <property type="match status" value="1"/>
</dbReference>
<dbReference type="FunFam" id="3.40.640.10:FF:000021">
    <property type="entry name" value="Glutamate-1-semialdehyde 2,1-aminomutase"/>
    <property type="match status" value="1"/>
</dbReference>
<dbReference type="Gene3D" id="3.90.1150.10">
    <property type="entry name" value="Aspartate Aminotransferase, domain 1"/>
    <property type="match status" value="1"/>
</dbReference>
<dbReference type="Gene3D" id="3.40.640.10">
    <property type="entry name" value="Type I PLP-dependent aspartate aminotransferase-like (Major domain)"/>
    <property type="match status" value="1"/>
</dbReference>
<dbReference type="HAMAP" id="MF_00375">
    <property type="entry name" value="HemL_aminotrans_3"/>
    <property type="match status" value="1"/>
</dbReference>
<dbReference type="InterPro" id="IPR004639">
    <property type="entry name" value="4pyrrol_synth_GluAld_NH2Trfase"/>
</dbReference>
<dbReference type="InterPro" id="IPR005814">
    <property type="entry name" value="Aminotrans_3"/>
</dbReference>
<dbReference type="InterPro" id="IPR049704">
    <property type="entry name" value="Aminotrans_3_PPA_site"/>
</dbReference>
<dbReference type="InterPro" id="IPR015424">
    <property type="entry name" value="PyrdxlP-dep_Trfase"/>
</dbReference>
<dbReference type="InterPro" id="IPR015421">
    <property type="entry name" value="PyrdxlP-dep_Trfase_major"/>
</dbReference>
<dbReference type="InterPro" id="IPR015422">
    <property type="entry name" value="PyrdxlP-dep_Trfase_small"/>
</dbReference>
<dbReference type="NCBIfam" id="TIGR00713">
    <property type="entry name" value="hemL"/>
    <property type="match status" value="1"/>
</dbReference>
<dbReference type="NCBIfam" id="NF000818">
    <property type="entry name" value="PRK00062.1"/>
    <property type="match status" value="1"/>
</dbReference>
<dbReference type="PANTHER" id="PTHR43713">
    <property type="entry name" value="GLUTAMATE-1-SEMIALDEHYDE 2,1-AMINOMUTASE"/>
    <property type="match status" value="1"/>
</dbReference>
<dbReference type="PANTHER" id="PTHR43713:SF3">
    <property type="entry name" value="GLUTAMATE-1-SEMIALDEHYDE 2,1-AMINOMUTASE 1, CHLOROPLASTIC-RELATED"/>
    <property type="match status" value="1"/>
</dbReference>
<dbReference type="Pfam" id="PF00202">
    <property type="entry name" value="Aminotran_3"/>
    <property type="match status" value="1"/>
</dbReference>
<dbReference type="SUPFAM" id="SSF53383">
    <property type="entry name" value="PLP-dependent transferases"/>
    <property type="match status" value="1"/>
</dbReference>
<dbReference type="PROSITE" id="PS00600">
    <property type="entry name" value="AA_TRANSFER_CLASS_3"/>
    <property type="match status" value="1"/>
</dbReference>
<accession>B1YJU8</accession>
<gene>
    <name evidence="1" type="primary">hemL2</name>
    <name type="ordered locus">Exig_2134</name>
</gene>
<organism>
    <name type="scientific">Exiguobacterium sibiricum (strain DSM 17290 / CCUG 55495 / CIP 109462 / JCM 13490 / 255-15)</name>
    <dbReference type="NCBI Taxonomy" id="262543"/>
    <lineage>
        <taxon>Bacteria</taxon>
        <taxon>Bacillati</taxon>
        <taxon>Bacillota</taxon>
        <taxon>Bacilli</taxon>
        <taxon>Bacillales</taxon>
        <taxon>Bacillales Family XII. Incertae Sedis</taxon>
        <taxon>Exiguobacterium</taxon>
    </lineage>
</organism>
<protein>
    <recommendedName>
        <fullName evidence="1">Glutamate-1-semialdehyde 2,1-aminomutase 2</fullName>
        <shortName evidence="1">GSA 2</shortName>
        <ecNumber evidence="1">5.4.3.8</ecNumber>
    </recommendedName>
    <alternativeName>
        <fullName evidence="1">Glutamate-1-semialdehyde aminotransferase 2</fullName>
        <shortName evidence="1">GSA-AT 2</shortName>
    </alternativeName>
</protein>
<keyword id="KW-0963">Cytoplasm</keyword>
<keyword id="KW-0413">Isomerase</keyword>
<keyword id="KW-0627">Porphyrin biosynthesis</keyword>
<keyword id="KW-0663">Pyridoxal phosphate</keyword>
<keyword id="KW-1185">Reference proteome</keyword>
<reference key="1">
    <citation type="submission" date="2008-04" db="EMBL/GenBank/DDBJ databases">
        <title>Complete sequence of chromosome of Exiguobacterium sibiricum 255-15.</title>
        <authorList>
            <consortium name="US DOE Joint Genome Institute"/>
            <person name="Copeland A."/>
            <person name="Lucas S."/>
            <person name="Lapidus A."/>
            <person name="Glavina del Rio T."/>
            <person name="Dalin E."/>
            <person name="Tice H."/>
            <person name="Bruce D."/>
            <person name="Goodwin L."/>
            <person name="Pitluck S."/>
            <person name="Kiss H."/>
            <person name="Chertkov O."/>
            <person name="Monk C."/>
            <person name="Brettin T."/>
            <person name="Detter J.C."/>
            <person name="Han C."/>
            <person name="Kuske C.R."/>
            <person name="Schmutz J."/>
            <person name="Larimer F."/>
            <person name="Land M."/>
            <person name="Hauser L."/>
            <person name="Kyrpides N."/>
            <person name="Mikhailova N."/>
            <person name="Vishnivetskaya T."/>
            <person name="Rodrigues D.F."/>
            <person name="Gilichinsky D."/>
            <person name="Tiedje J."/>
            <person name="Richardson P."/>
        </authorList>
    </citation>
    <scope>NUCLEOTIDE SEQUENCE [LARGE SCALE GENOMIC DNA]</scope>
    <source>
        <strain>DSM 17290 / CCUG 55495 / CIP 109462 / JCM 13490 / 255-15</strain>
    </source>
</reference>
<proteinExistence type="inferred from homology"/>
<evidence type="ECO:0000255" key="1">
    <source>
        <dbReference type="HAMAP-Rule" id="MF_00375"/>
    </source>
</evidence>